<organism>
    <name type="scientific">Shewanella denitrificans (strain OS217 / ATCC BAA-1090 / DSM 15013)</name>
    <dbReference type="NCBI Taxonomy" id="318161"/>
    <lineage>
        <taxon>Bacteria</taxon>
        <taxon>Pseudomonadati</taxon>
        <taxon>Pseudomonadota</taxon>
        <taxon>Gammaproteobacteria</taxon>
        <taxon>Alteromonadales</taxon>
        <taxon>Shewanellaceae</taxon>
        <taxon>Shewanella</taxon>
    </lineage>
</organism>
<accession>Q12K62</accession>
<gene>
    <name evidence="1" type="primary">lptD</name>
    <name type="synonym">imp</name>
    <name type="synonym">ostA</name>
    <name type="ordered locus">Sden_2885</name>
</gene>
<dbReference type="EMBL" id="CP000302">
    <property type="protein sequence ID" value="ABE56164.1"/>
    <property type="molecule type" value="Genomic_DNA"/>
</dbReference>
<dbReference type="RefSeq" id="WP_011497313.1">
    <property type="nucleotide sequence ID" value="NC_007954.1"/>
</dbReference>
<dbReference type="SMR" id="Q12K62"/>
<dbReference type="STRING" id="318161.Sden_2885"/>
<dbReference type="KEGG" id="sdn:Sden_2885"/>
<dbReference type="eggNOG" id="COG1452">
    <property type="taxonomic scope" value="Bacteria"/>
</dbReference>
<dbReference type="HOGENOM" id="CLU_009039_2_0_6"/>
<dbReference type="OrthoDB" id="9760225at2"/>
<dbReference type="Proteomes" id="UP000001982">
    <property type="component" value="Chromosome"/>
</dbReference>
<dbReference type="GO" id="GO:0009279">
    <property type="term" value="C:cell outer membrane"/>
    <property type="evidence" value="ECO:0007669"/>
    <property type="project" value="UniProtKB-SubCell"/>
</dbReference>
<dbReference type="GO" id="GO:1990351">
    <property type="term" value="C:transporter complex"/>
    <property type="evidence" value="ECO:0007669"/>
    <property type="project" value="TreeGrafter"/>
</dbReference>
<dbReference type="GO" id="GO:0043165">
    <property type="term" value="P:Gram-negative-bacterium-type cell outer membrane assembly"/>
    <property type="evidence" value="ECO:0007669"/>
    <property type="project" value="UniProtKB-UniRule"/>
</dbReference>
<dbReference type="GO" id="GO:0015920">
    <property type="term" value="P:lipopolysaccharide transport"/>
    <property type="evidence" value="ECO:0007669"/>
    <property type="project" value="InterPro"/>
</dbReference>
<dbReference type="Gene3D" id="2.60.450.10">
    <property type="entry name" value="Lipopolysaccharide (LPS) transport protein A like domain"/>
    <property type="match status" value="1"/>
</dbReference>
<dbReference type="HAMAP" id="MF_01411">
    <property type="entry name" value="LPS_assembly_LptD"/>
    <property type="match status" value="1"/>
</dbReference>
<dbReference type="InterPro" id="IPR020889">
    <property type="entry name" value="LipoPS_assembly_LptD"/>
</dbReference>
<dbReference type="InterPro" id="IPR050218">
    <property type="entry name" value="LptD"/>
</dbReference>
<dbReference type="InterPro" id="IPR007543">
    <property type="entry name" value="LptD_C"/>
</dbReference>
<dbReference type="InterPro" id="IPR005653">
    <property type="entry name" value="OstA-like_N"/>
</dbReference>
<dbReference type="NCBIfam" id="NF002997">
    <property type="entry name" value="PRK03761.1"/>
    <property type="match status" value="1"/>
</dbReference>
<dbReference type="PANTHER" id="PTHR30189">
    <property type="entry name" value="LPS-ASSEMBLY PROTEIN"/>
    <property type="match status" value="1"/>
</dbReference>
<dbReference type="PANTHER" id="PTHR30189:SF1">
    <property type="entry name" value="LPS-ASSEMBLY PROTEIN LPTD"/>
    <property type="match status" value="1"/>
</dbReference>
<dbReference type="Pfam" id="PF04453">
    <property type="entry name" value="LptD"/>
    <property type="match status" value="1"/>
</dbReference>
<dbReference type="Pfam" id="PF03968">
    <property type="entry name" value="LptD_N"/>
    <property type="match status" value="1"/>
</dbReference>
<evidence type="ECO:0000255" key="1">
    <source>
        <dbReference type="HAMAP-Rule" id="MF_01411"/>
    </source>
</evidence>
<proteinExistence type="inferred from homology"/>
<protein>
    <recommendedName>
        <fullName evidence="1">LPS-assembly protein LptD</fullName>
    </recommendedName>
</protein>
<keyword id="KW-0998">Cell outer membrane</keyword>
<keyword id="KW-0472">Membrane</keyword>
<keyword id="KW-1185">Reference proteome</keyword>
<keyword id="KW-0732">Signal</keyword>
<reference key="1">
    <citation type="submission" date="2006-03" db="EMBL/GenBank/DDBJ databases">
        <title>Complete sequence of Shewanella denitrificans OS217.</title>
        <authorList>
            <consortium name="US DOE Joint Genome Institute"/>
            <person name="Copeland A."/>
            <person name="Lucas S."/>
            <person name="Lapidus A."/>
            <person name="Barry K."/>
            <person name="Detter J.C."/>
            <person name="Glavina del Rio T."/>
            <person name="Hammon N."/>
            <person name="Israni S."/>
            <person name="Dalin E."/>
            <person name="Tice H."/>
            <person name="Pitluck S."/>
            <person name="Brettin T."/>
            <person name="Bruce D."/>
            <person name="Han C."/>
            <person name="Tapia R."/>
            <person name="Gilna P."/>
            <person name="Kiss H."/>
            <person name="Schmutz J."/>
            <person name="Larimer F."/>
            <person name="Land M."/>
            <person name="Hauser L."/>
            <person name="Kyrpides N."/>
            <person name="Lykidis A."/>
            <person name="Richardson P."/>
        </authorList>
    </citation>
    <scope>NUCLEOTIDE SEQUENCE [LARGE SCALE GENOMIC DNA]</scope>
    <source>
        <strain>OS217 / ATCC BAA-1090 / DSM 15013</strain>
    </source>
</reference>
<comment type="function">
    <text evidence="1">Together with LptE, is involved in the assembly of lipopolysaccharide (LPS) at the surface of the outer membrane.</text>
</comment>
<comment type="subunit">
    <text evidence="1">Component of the lipopolysaccharide transport and assembly complex. Interacts with LptE and LptA.</text>
</comment>
<comment type="subcellular location">
    <subcellularLocation>
        <location evidence="1">Cell outer membrane</location>
    </subcellularLocation>
</comment>
<comment type="similarity">
    <text evidence="1">Belongs to the LptD family.</text>
</comment>
<sequence length="766" mass="87937">MNIRYLLLLSLMPHLVWAAEEPTPEIPFSQCLIEPPVSRSFDDRAQLTDIDPNDIVIISDRTDASFNKQAHFDGDVSFSQGQRHIAADKATLDQRQQQLSATGNLIFKDENITVTADTLEAQMSSNSATLDNTQYWLHGQQVHGKASKMQITSENNLLLSNANFTTCPPGDESWLLEAELIKIDSKEEWGEIWNAKLRIADVPVLYIPYMTVPVSDKRKTGFLFPNFSTSTTNGVQVSTPYYWNIAPEYDLTFTPDMMSSRGLFTKTQVNYLAGEAQQGQVNFEYLDNDNKLAGSPNRYLYNMSHQGAINDNWRVQANFTDVSDNNYFNDLNSDVNRSTDNQLSRIGETSYFERNWDMSVRVQDIKVLGESEKPYQVMPQLNFNYRVADIWQAIDFNFNSELTNFEHQDDNRNTATRIHLVPSLVWPIQGPAGSFTSELKLLQTQFFQQTQDSNNPYNQDVSRTIPQLRLHGKVNFERPANIWGEAYRQTIEPQVQYLYVGYEDQSNIGFYDTAQLQDDYFGLFRDRRFSGHDRIADANQATVGLTSRLLDASNREQFKFSIGQTLYIEDSKVLLNQGLRDAQQSASVLAAELDARLYQDWFISGAVQHDTEHGKNKKSEVTLDYRPSNDKLLQFSYRFVPDLLNTNTNGRVNISQMGVRTSWPLTDSLYFVGNWYHDLKEERDVETYTGIQYESCCWAVRLSYHYRIKTNYDDELMASIDNREEFEKGVYLNFVIKGLGGSGPLGVSDMLDEGLFNYRKPLYLRN</sequence>
<feature type="signal peptide" evidence="1">
    <location>
        <begin position="1"/>
        <end position="18"/>
    </location>
</feature>
<feature type="chain" id="PRO_5000114822" description="LPS-assembly protein LptD">
    <location>
        <begin position="19"/>
        <end position="766"/>
    </location>
</feature>
<name>LPTD_SHEDO</name>